<gene>
    <name type="primary">CREB3</name>
</gene>
<protein>
    <recommendedName>
        <fullName>Cyclic AMP-responsive element-binding protein 3</fullName>
        <shortName>CREB-3</shortName>
        <shortName>cAMP-responsive element-binding protein 3</shortName>
    </recommendedName>
    <alternativeName>
        <fullName>Luman</fullName>
    </alternativeName>
    <component>
        <recommendedName>
            <fullName>Processed cyclic AMP-responsive element-binding protein 3</fullName>
        </recommendedName>
    </component>
</protein>
<accession>Q8SQ19</accession>
<accession>Q0V894</accession>
<accession>Q3T167</accession>
<accession>Q5EA05</accession>
<accession>Q5EA30</accession>
<organism>
    <name type="scientific">Bos taurus</name>
    <name type="common">Bovine</name>
    <dbReference type="NCBI Taxonomy" id="9913"/>
    <lineage>
        <taxon>Eukaryota</taxon>
        <taxon>Metazoa</taxon>
        <taxon>Chordata</taxon>
        <taxon>Craniata</taxon>
        <taxon>Vertebrata</taxon>
        <taxon>Euteleostomi</taxon>
        <taxon>Mammalia</taxon>
        <taxon>Eutheria</taxon>
        <taxon>Laurasiatheria</taxon>
        <taxon>Artiodactyla</taxon>
        <taxon>Ruminantia</taxon>
        <taxon>Pecora</taxon>
        <taxon>Bovidae</taxon>
        <taxon>Bovinae</taxon>
        <taxon>Bos</taxon>
    </lineage>
</organism>
<reference key="1">
    <citation type="journal article" date="2005" name="BMC Genomics">
        <title>Characterization of 954 bovine full-CDS cDNA sequences.</title>
        <authorList>
            <person name="Harhay G.P."/>
            <person name="Sonstegard T.S."/>
            <person name="Keele J.W."/>
            <person name="Heaton M.P."/>
            <person name="Clawson M.L."/>
            <person name="Snelling W.M."/>
            <person name="Wiedmann R.T."/>
            <person name="Van Tassell C.P."/>
            <person name="Smith T.P.L."/>
        </authorList>
    </citation>
    <scope>NUCLEOTIDE SEQUENCE [LARGE SCALE MRNA]</scope>
</reference>
<reference key="2">
    <citation type="submission" date="2005-08" db="EMBL/GenBank/DDBJ databases">
        <authorList>
            <consortium name="NIH - Mammalian Gene Collection (MGC) project"/>
        </authorList>
    </citation>
    <scope>NUCLEOTIDE SEQUENCE [LARGE SCALE MRNA]</scope>
    <source>
        <strain>Crossbred X Angus</strain>
        <tissue>Ileum</tissue>
    </source>
</reference>
<reference key="3">
    <citation type="submission" date="2001-05" db="EMBL/GenBank/DDBJ databases">
        <authorList>
            <person name="Budihal P.C."/>
            <person name="Misra V."/>
        </authorList>
    </citation>
    <scope>NUCLEOTIDE SEQUENCE [MRNA] OF 4-368</scope>
</reference>
<reference key="4">
    <citation type="journal article" date="2000" name="J. Virol.">
        <title>Potential role for luman, the cellular homologue of herpes simplex virus VP16 (alpha gene trans-inducing factor), in herpesvirus latency.</title>
        <authorList>
            <person name="Lu R."/>
            <person name="Misra V."/>
        </authorList>
    </citation>
    <scope>SUBCELLULAR LOCATION</scope>
    <scope>TISSUE SPECIFICITY</scope>
</reference>
<comment type="function">
    <text evidence="2">Endoplasmic reticulum (ER)-bound sequence-specific transcription factor that directly binds DNA and activates transcription. Plays a role in the unfolded protein response (UPR), promoting cell survival versus ER stress-induced apoptotic cell death. Also involved in cell proliferation, migration and differentiation, tumor suppression and inflammatory gene expression. Acts as a positive regulator of LKN-1/CCL15-induced chemotaxis signaling of leukocyte cell migration. Associates with chromatin to the HERPUD1 promoter. Also induces transcriptional activation of chemokine receptors. Functions as a negative transcriptional regulator in ligand-induced transcriptional activation of the glucocorticoid receptor NR3C1 by recruiting and activating histone deacetylases (HDAC1, HDAC2 and HDAC6). Also decreases the acetylation level of histone H4. Does not promote the chemotactic activity of leukocyte cells.</text>
</comment>
<comment type="function">
    <molecule>Processed cyclic AMP-responsive element-binding protein 3</molecule>
    <text evidence="2">This is the transcriptionally active form that translocates to the nucleus and activates unfolded protein response (UPR) target genes during endoplasmic reticulum (ER) stress response. Binds the cAMP response element (CRE) (consensus: 5'-GTGACGT[AG][AG]-3') and C/EBP sequences present in many promoters to activate transcription of the genes. Binds to the unfolded protein response element (UPRE) consensus sequences sites. Binds DNA to the 5'-CCAC[GA]-3'half of ERSE II (5'-ATTGG-N-CCACG-3').</text>
</comment>
<comment type="subunit">
    <text evidence="2">Homodimer. Interacts with HCFC1; the interaction is required to stimulate CREB3 transcriptional activity. Interacts with CREBZF; the interaction occurs only in combination with HCFC1. Interacts (via central part and transmembrane region) with DCSTAMP (via C-terminus cytoplasmic domain). Interacts with OS9. Interacts (via leucine-zipper domain) with CREBRF (via leucine-zipper domain); the interaction occurs only after CREB3 activation and promotes CREB3 degradation. Interacts (via C-terminal domain) with CCR1.</text>
</comment>
<comment type="subcellular location">
    <subcellularLocation>
        <location evidence="2">Endoplasmic reticulum membrane</location>
        <topology evidence="2 3">Single-pass type II membrane protein</topology>
    </subcellularLocation>
    <subcellularLocation>
        <location evidence="2">Golgi apparatus</location>
    </subcellularLocation>
    <subcellularLocation>
        <location evidence="2">Nucleus</location>
    </subcellularLocation>
    <subcellularLocation>
        <location evidence="2">Cytoplasm</location>
    </subcellularLocation>
    <text evidence="2">Colocalizes with HCFC1 in neuronal cell bodies of the trigeminal ganglia. Colocalizes with DCSTAMP in the ER membrane of immature dendritic cell (DC). Colocalizes with CANX, CCR1, HCFC1 in the ER membrane.</text>
</comment>
<comment type="subcellular location">
    <molecule>Processed cyclic AMP-responsive element-binding protein 3</molecule>
    <subcellularLocation>
        <location evidence="2">Nucleus</location>
    </subcellularLocation>
    <text evidence="2">Upon RIP activation the transcriptional active processed cyclic AMP-responsive element-binding protein 3 form translocates into the nucleus. Detected in the nucleus upon dendritic cell maturation and RIP activation. Colocalizes with CREBRF in nuclear foci. Colocalizes with CREBZF in promyelocytic leukemia protein nuclear bodies (PML-NB).</text>
</comment>
<comment type="tissue specificity">
    <text evidence="5">Expressed in trigeminal ganglia (at protein level).</text>
</comment>
<comment type="PTM">
    <text evidence="2">First proteolytically cleaved by site-1 protease (S1P) that generates membrane-associated N-terminus and a luminal C-terminus forms. The membrane-associated N-terminus form is further proteolytically processed probably by the site-2 protease (S2P) through a regulated intramembrane proteolysis (RIP), releasing the transcriptional active processed cyclic AMP-responsive element-binding protein 3 form, which is transported to the nucleus. The proteolytic cleavage is strongly induced during dendritic cell (DC) maturation and inhibited by DCSTAMP. That form is rapidly degraded.</text>
</comment>
<comment type="PTM">
    <text evidence="2">N-glycosylated.</text>
</comment>
<comment type="similarity">
    <text evidence="6">Belongs to the bZIP family. ATF subfamily.</text>
</comment>
<proteinExistence type="evidence at protein level"/>
<evidence type="ECO:0000250" key="1"/>
<evidence type="ECO:0000250" key="2">
    <source>
        <dbReference type="UniProtKB" id="O43889"/>
    </source>
</evidence>
<evidence type="ECO:0000255" key="3"/>
<evidence type="ECO:0000255" key="4">
    <source>
        <dbReference type="PROSITE-ProRule" id="PRU00978"/>
    </source>
</evidence>
<evidence type="ECO:0000269" key="5">
    <source>
    </source>
</evidence>
<evidence type="ECO:0000305" key="6"/>
<sequence>MSHMELALDPGDHDLLGFLLEESGGLGAAPDEALTSPPDWELPLSESLSDWDVEDFLSCLPSPPAVLNVFSNSDPCLVQHDHTYSLSQEHVSIDLDNESYEKERAQMTPLRVEEPADQEIARLILTEEEKRLLEKEGLTLPGMLPLTKMEEQVLKRVRRKIRNKKSAQESRRKKKVYVGGLESRVLKYTAQNLELQNKVQLLEEQNLSLLDQLRRLQAMVIQTANKASSSSTCVLVLLFSFCLLLVPAMYSSDTRGSLPAEHRVLSRQLRALPSEDPPQLEPPALQSEVPKDSLNPELQAASNSCCLFHLMPQAPRAEPPLQLPLPDGFSGCSCPDSISPLHANLTREEGWLPTPSPTSVILQGRYSG</sequence>
<feature type="chain" id="PRO_0000076601" description="Cyclic AMP-responsive element-binding protein 3">
    <location>
        <begin position="1"/>
        <end position="368"/>
    </location>
</feature>
<feature type="chain" id="PRO_0000296203" description="Processed cyclic AMP-responsive element-binding protein 3">
    <location>
        <begin position="1"/>
        <end status="unknown"/>
    </location>
</feature>
<feature type="topological domain" description="Cytoplasmic" evidence="3">
    <location>
        <begin position="1"/>
        <end position="229"/>
    </location>
</feature>
<feature type="transmembrane region" description="Helical; Signal-anchor for type II membrane protein" evidence="3">
    <location>
        <begin position="230"/>
        <end position="250"/>
    </location>
</feature>
<feature type="topological domain" description="Lumenal" evidence="3">
    <location>
        <begin position="251"/>
        <end position="368"/>
    </location>
</feature>
<feature type="domain" description="bZIP" evidence="4">
    <location>
        <begin position="153"/>
        <end position="216"/>
    </location>
</feature>
<feature type="region of interest" description="Transcription activation (acidic)">
    <location>
        <begin position="1"/>
        <end position="95"/>
    </location>
</feature>
<feature type="region of interest" description="Basic motif" evidence="4">
    <location>
        <begin position="155"/>
        <end position="184"/>
    </location>
</feature>
<feature type="region of interest" description="Leucine-zipper" evidence="4">
    <location>
        <begin position="186"/>
        <end position="193"/>
    </location>
</feature>
<feature type="short sequence motif" description="LXXLL motif 1">
    <location>
        <begin position="16"/>
        <end position="20"/>
    </location>
</feature>
<feature type="short sequence motif" description="LXXLL motif 2">
    <location>
        <begin position="57"/>
        <end position="61"/>
    </location>
</feature>
<feature type="short sequence motif" description="HCFC1-binding-motif (HBM)">
    <location>
        <begin position="81"/>
        <end position="84"/>
    </location>
</feature>
<feature type="site" description="Cleavage; by PS1" evidence="1">
    <location>
        <begin position="266"/>
        <end position="267"/>
    </location>
</feature>
<feature type="site" description="Cleavage; by PS1" evidence="1">
    <location>
        <begin position="269"/>
        <end position="270"/>
    </location>
</feature>
<feature type="glycosylation site" description="N-linked (GlcNAc...) asparagine" evidence="3">
    <location>
        <position position="344"/>
    </location>
</feature>
<feature type="sequence conflict" description="In Ref. 1; AAX08756." evidence="6" ref="1">
    <original>E</original>
    <variation>EPVNLNPVQ</variation>
    <location>
        <position position="46"/>
    </location>
</feature>
<dbReference type="EMBL" id="BT020739">
    <property type="protein sequence ID" value="AAX08756.1"/>
    <property type="molecule type" value="mRNA"/>
</dbReference>
<dbReference type="EMBL" id="BT020752">
    <property type="protein sequence ID" value="AAX08769.1"/>
    <property type="molecule type" value="mRNA"/>
</dbReference>
<dbReference type="EMBL" id="BT020764">
    <property type="protein sequence ID" value="AAX08781.1"/>
    <property type="molecule type" value="mRNA"/>
</dbReference>
<dbReference type="EMBL" id="BT020801">
    <property type="protein sequence ID" value="AAX08818.1"/>
    <property type="molecule type" value="mRNA"/>
</dbReference>
<dbReference type="EMBL" id="BT021155">
    <property type="protein sequence ID" value="AAX31337.1"/>
    <property type="molecule type" value="mRNA"/>
</dbReference>
<dbReference type="EMBL" id="BT026325">
    <property type="protein sequence ID" value="ABG81481.1"/>
    <property type="molecule type" value="mRNA"/>
</dbReference>
<dbReference type="EMBL" id="BC102092">
    <property type="protein sequence ID" value="AAI02093.1"/>
    <property type="molecule type" value="mRNA"/>
</dbReference>
<dbReference type="EMBL" id="AF387035">
    <property type="protein sequence ID" value="AAL84006.1"/>
    <property type="molecule type" value="mRNA"/>
</dbReference>
<dbReference type="RefSeq" id="NP_776711.1">
    <property type="nucleotide sequence ID" value="NM_174286.2"/>
</dbReference>
<dbReference type="SMR" id="Q8SQ19"/>
<dbReference type="FunCoup" id="Q8SQ19">
    <property type="interactions" value="1023"/>
</dbReference>
<dbReference type="STRING" id="9913.ENSBTAP00000015193"/>
<dbReference type="GlyCosmos" id="Q8SQ19">
    <property type="glycosylation" value="1 site, No reported glycans"/>
</dbReference>
<dbReference type="GlyGen" id="Q8SQ19">
    <property type="glycosylation" value="1 site"/>
</dbReference>
<dbReference type="PaxDb" id="9913-ENSBTAP00000015193"/>
<dbReference type="GeneID" id="281715"/>
<dbReference type="KEGG" id="bta:281715"/>
<dbReference type="CTD" id="10488"/>
<dbReference type="VEuPathDB" id="HostDB:ENSBTAG00000011429"/>
<dbReference type="eggNOG" id="KOG0709">
    <property type="taxonomic scope" value="Eukaryota"/>
</dbReference>
<dbReference type="HOGENOM" id="CLU_047257_0_0_1"/>
<dbReference type="InParanoid" id="Q8SQ19"/>
<dbReference type="OMA" id="CLLYHMP"/>
<dbReference type="OrthoDB" id="674948at2759"/>
<dbReference type="TreeFam" id="TF316079"/>
<dbReference type="Reactome" id="R-BTA-8874211">
    <property type="pathway name" value="CREB3 factors activate genes"/>
</dbReference>
<dbReference type="Proteomes" id="UP000009136">
    <property type="component" value="Chromosome 8"/>
</dbReference>
<dbReference type="Bgee" id="ENSBTAG00000011429">
    <property type="expression patterns" value="Expressed in aorta and 104 other cell types or tissues"/>
</dbReference>
<dbReference type="GO" id="GO:0005737">
    <property type="term" value="C:cytoplasm"/>
    <property type="evidence" value="ECO:0000250"/>
    <property type="project" value="UniProtKB"/>
</dbReference>
<dbReference type="GO" id="GO:0005789">
    <property type="term" value="C:endoplasmic reticulum membrane"/>
    <property type="evidence" value="ECO:0000250"/>
    <property type="project" value="UniProtKB"/>
</dbReference>
<dbReference type="GO" id="GO:0000139">
    <property type="term" value="C:Golgi membrane"/>
    <property type="evidence" value="ECO:0000250"/>
    <property type="project" value="UniProtKB"/>
</dbReference>
<dbReference type="GO" id="GO:0016020">
    <property type="term" value="C:membrane"/>
    <property type="evidence" value="ECO:0000250"/>
    <property type="project" value="UniProtKB"/>
</dbReference>
<dbReference type="GO" id="GO:0043025">
    <property type="term" value="C:neuronal cell body"/>
    <property type="evidence" value="ECO:0000250"/>
    <property type="project" value="UniProtKB"/>
</dbReference>
<dbReference type="GO" id="GO:0016604">
    <property type="term" value="C:nuclear body"/>
    <property type="evidence" value="ECO:0000250"/>
    <property type="project" value="UniProtKB"/>
</dbReference>
<dbReference type="GO" id="GO:0005634">
    <property type="term" value="C:nucleus"/>
    <property type="evidence" value="ECO:0000250"/>
    <property type="project" value="UniProtKB"/>
</dbReference>
<dbReference type="GO" id="GO:0003682">
    <property type="term" value="F:chromatin binding"/>
    <property type="evidence" value="ECO:0000250"/>
    <property type="project" value="UniProtKB"/>
</dbReference>
<dbReference type="GO" id="GO:0003700">
    <property type="term" value="F:DNA-binding transcription factor activity"/>
    <property type="evidence" value="ECO:0000250"/>
    <property type="project" value="UniProtKB"/>
</dbReference>
<dbReference type="GO" id="GO:0000981">
    <property type="term" value="F:DNA-binding transcription factor activity, RNA polymerase II-specific"/>
    <property type="evidence" value="ECO:0000318"/>
    <property type="project" value="GO_Central"/>
</dbReference>
<dbReference type="GO" id="GO:0042803">
    <property type="term" value="F:protein homodimerization activity"/>
    <property type="evidence" value="ECO:0000250"/>
    <property type="project" value="UniProtKB"/>
</dbReference>
<dbReference type="GO" id="GO:0000978">
    <property type="term" value="F:RNA polymerase II cis-regulatory region sequence-specific DNA binding"/>
    <property type="evidence" value="ECO:0000318"/>
    <property type="project" value="GO_Central"/>
</dbReference>
<dbReference type="GO" id="GO:0000977">
    <property type="term" value="F:RNA polymerase II transcription regulatory region sequence-specific DNA binding"/>
    <property type="evidence" value="ECO:0000250"/>
    <property type="project" value="UniProtKB"/>
</dbReference>
<dbReference type="GO" id="GO:0006935">
    <property type="term" value="P:chemotaxis"/>
    <property type="evidence" value="ECO:0007669"/>
    <property type="project" value="UniProtKB-KW"/>
</dbReference>
<dbReference type="GO" id="GO:0019043">
    <property type="term" value="P:establishment of viral latency"/>
    <property type="evidence" value="ECO:0000250"/>
    <property type="project" value="UniProtKB"/>
</dbReference>
<dbReference type="GO" id="GO:0050930">
    <property type="term" value="P:induction of positive chemotaxis"/>
    <property type="evidence" value="ECO:0000250"/>
    <property type="project" value="UniProtKB"/>
</dbReference>
<dbReference type="GO" id="GO:0090045">
    <property type="term" value="P:positive regulation of deacetylase activity"/>
    <property type="evidence" value="ECO:0000250"/>
    <property type="project" value="UniProtKB"/>
</dbReference>
<dbReference type="GO" id="GO:0002230">
    <property type="term" value="P:positive regulation of defense response to virus by host"/>
    <property type="evidence" value="ECO:0000250"/>
    <property type="project" value="UniProtKB"/>
</dbReference>
<dbReference type="GO" id="GO:0090026">
    <property type="term" value="P:positive regulation of monocyte chemotaxis"/>
    <property type="evidence" value="ECO:0000250"/>
    <property type="project" value="UniProtKB"/>
</dbReference>
<dbReference type="GO" id="GO:0045944">
    <property type="term" value="P:positive regulation of transcription by RNA polymerase II"/>
    <property type="evidence" value="ECO:0000250"/>
    <property type="project" value="UniProtKB"/>
</dbReference>
<dbReference type="GO" id="GO:0042981">
    <property type="term" value="P:regulation of apoptotic process"/>
    <property type="evidence" value="ECO:0000250"/>
    <property type="project" value="UniProtKB"/>
</dbReference>
<dbReference type="GO" id="GO:0001558">
    <property type="term" value="P:regulation of cell growth"/>
    <property type="evidence" value="ECO:0000250"/>
    <property type="project" value="UniProtKB"/>
</dbReference>
<dbReference type="GO" id="GO:0006357">
    <property type="term" value="P:regulation of transcription by RNA polymerase II"/>
    <property type="evidence" value="ECO:0000318"/>
    <property type="project" value="GO_Central"/>
</dbReference>
<dbReference type="GO" id="GO:0019046">
    <property type="term" value="P:release from viral latency"/>
    <property type="evidence" value="ECO:0000250"/>
    <property type="project" value="UniProtKB"/>
</dbReference>
<dbReference type="GO" id="GO:0006986">
    <property type="term" value="P:response to unfolded protein"/>
    <property type="evidence" value="ECO:0007669"/>
    <property type="project" value="UniProtKB-KW"/>
</dbReference>
<dbReference type="CDD" id="cd14689">
    <property type="entry name" value="bZIP_CREB3"/>
    <property type="match status" value="1"/>
</dbReference>
<dbReference type="FunFam" id="1.20.5.170:FF:000042">
    <property type="entry name" value="Cyclic AMP-responsive element-binding protein 3-like protein 3"/>
    <property type="match status" value="1"/>
</dbReference>
<dbReference type="Gene3D" id="1.20.5.170">
    <property type="match status" value="1"/>
</dbReference>
<dbReference type="InterPro" id="IPR004827">
    <property type="entry name" value="bZIP"/>
</dbReference>
<dbReference type="InterPro" id="IPR046347">
    <property type="entry name" value="bZIP_sf"/>
</dbReference>
<dbReference type="InterPro" id="IPR051381">
    <property type="entry name" value="CREB_ATF_subfamily"/>
</dbReference>
<dbReference type="PANTHER" id="PTHR45996">
    <property type="entry name" value="AGAP001464-PB"/>
    <property type="match status" value="1"/>
</dbReference>
<dbReference type="PANTHER" id="PTHR45996:SF4">
    <property type="entry name" value="CYCLIC AMP-RESPONSIVE ELEMENT-BINDING PROTEIN 3"/>
    <property type="match status" value="1"/>
</dbReference>
<dbReference type="Pfam" id="PF00170">
    <property type="entry name" value="bZIP_1"/>
    <property type="match status" value="1"/>
</dbReference>
<dbReference type="SMART" id="SM00338">
    <property type="entry name" value="BRLZ"/>
    <property type="match status" value="1"/>
</dbReference>
<dbReference type="SUPFAM" id="SSF57959">
    <property type="entry name" value="Leucine zipper domain"/>
    <property type="match status" value="1"/>
</dbReference>
<dbReference type="PROSITE" id="PS50217">
    <property type="entry name" value="BZIP"/>
    <property type="match status" value="1"/>
</dbReference>
<dbReference type="PROSITE" id="PS00036">
    <property type="entry name" value="BZIP_BASIC"/>
    <property type="match status" value="1"/>
</dbReference>
<keyword id="KW-0010">Activator</keyword>
<keyword id="KW-0145">Chemotaxis</keyword>
<keyword id="KW-0963">Cytoplasm</keyword>
<keyword id="KW-0238">DNA-binding</keyword>
<keyword id="KW-0256">Endoplasmic reticulum</keyword>
<keyword id="KW-0325">Glycoprotein</keyword>
<keyword id="KW-0333">Golgi apparatus</keyword>
<keyword id="KW-0472">Membrane</keyword>
<keyword id="KW-0539">Nucleus</keyword>
<keyword id="KW-1185">Reference proteome</keyword>
<keyword id="KW-0678">Repressor</keyword>
<keyword id="KW-0735">Signal-anchor</keyword>
<keyword id="KW-0804">Transcription</keyword>
<keyword id="KW-0805">Transcription regulation</keyword>
<keyword id="KW-0812">Transmembrane</keyword>
<keyword id="KW-1133">Transmembrane helix</keyword>
<keyword id="KW-0834">Unfolded protein response</keyword>
<name>CREB3_BOVIN</name>